<sequence>MIPPCENAPHIIYHESQRGTRDRDIAKRLQYPSRQDLNSKWKKSVLQPPQCKMKVNVWEIKPPDFSYKLYTSLRIPERSSKPIKEEKRRKKISFPETMLHLPSIRNHPKEVTAPKFITTFPHLDLQKAKLMFVKSGQYPRGVYVNPKPHDFRQYQPGLPNFETTYEKDPFGLKFKSQHLSTVHGYQLPKDDKQKTSTERFITHKHCECTWDSKLILTKAPWPVRSASYTRHRRQRDAYSAFMDRVEEKFTKICKSR</sequence>
<reference key="1">
    <citation type="journal article" date="2003" name="Nature">
        <title>The DNA sequence of human chromosome 7.</title>
        <authorList>
            <person name="Hillier L.W."/>
            <person name="Fulton R.S."/>
            <person name="Fulton L.A."/>
            <person name="Graves T.A."/>
            <person name="Pepin K.H."/>
            <person name="Wagner-McPherson C."/>
            <person name="Layman D."/>
            <person name="Maas J."/>
            <person name="Jaeger S."/>
            <person name="Walker R."/>
            <person name="Wylie K."/>
            <person name="Sekhon M."/>
            <person name="Becker M.C."/>
            <person name="O'Laughlin M.D."/>
            <person name="Schaller M.E."/>
            <person name="Fewell G.A."/>
            <person name="Delehaunty K.D."/>
            <person name="Miner T.L."/>
            <person name="Nash W.E."/>
            <person name="Cordes M."/>
            <person name="Du H."/>
            <person name="Sun H."/>
            <person name="Edwards J."/>
            <person name="Bradshaw-Cordum H."/>
            <person name="Ali J."/>
            <person name="Andrews S."/>
            <person name="Isak A."/>
            <person name="Vanbrunt A."/>
            <person name="Nguyen C."/>
            <person name="Du F."/>
            <person name="Lamar B."/>
            <person name="Courtney L."/>
            <person name="Kalicki J."/>
            <person name="Ozersky P."/>
            <person name="Bielicki L."/>
            <person name="Scott K."/>
            <person name="Holmes A."/>
            <person name="Harkins R."/>
            <person name="Harris A."/>
            <person name="Strong C.M."/>
            <person name="Hou S."/>
            <person name="Tomlinson C."/>
            <person name="Dauphin-Kohlberg S."/>
            <person name="Kozlowicz-Reilly A."/>
            <person name="Leonard S."/>
            <person name="Rohlfing T."/>
            <person name="Rock S.M."/>
            <person name="Tin-Wollam A.-M."/>
            <person name="Abbott A."/>
            <person name="Minx P."/>
            <person name="Maupin R."/>
            <person name="Strowmatt C."/>
            <person name="Latreille P."/>
            <person name="Miller N."/>
            <person name="Johnson D."/>
            <person name="Murray J."/>
            <person name="Woessner J.P."/>
            <person name="Wendl M.C."/>
            <person name="Yang S.-P."/>
            <person name="Schultz B.R."/>
            <person name="Wallis J.W."/>
            <person name="Spieth J."/>
            <person name="Bieri T.A."/>
            <person name="Nelson J.O."/>
            <person name="Berkowicz N."/>
            <person name="Wohldmann P.E."/>
            <person name="Cook L.L."/>
            <person name="Hickenbotham M.T."/>
            <person name="Eldred J."/>
            <person name="Williams D."/>
            <person name="Bedell J.A."/>
            <person name="Mardis E.R."/>
            <person name="Clifton S.W."/>
            <person name="Chissoe S.L."/>
            <person name="Marra M.A."/>
            <person name="Raymond C."/>
            <person name="Haugen E."/>
            <person name="Gillett W."/>
            <person name="Zhou Y."/>
            <person name="James R."/>
            <person name="Phelps K."/>
            <person name="Iadanoto S."/>
            <person name="Bubb K."/>
            <person name="Simms E."/>
            <person name="Levy R."/>
            <person name="Clendenning J."/>
            <person name="Kaul R."/>
            <person name="Kent W.J."/>
            <person name="Furey T.S."/>
            <person name="Baertsch R.A."/>
            <person name="Brent M.R."/>
            <person name="Keibler E."/>
            <person name="Flicek P."/>
            <person name="Bork P."/>
            <person name="Suyama M."/>
            <person name="Bailey J.A."/>
            <person name="Portnoy M.E."/>
            <person name="Torrents D."/>
            <person name="Chinwalla A.T."/>
            <person name="Gish W.R."/>
            <person name="Eddy S.R."/>
            <person name="McPherson J.D."/>
            <person name="Olson M.V."/>
            <person name="Eichler E.E."/>
            <person name="Green E.D."/>
            <person name="Waterston R.H."/>
            <person name="Wilson R.K."/>
        </authorList>
    </citation>
    <scope>NUCLEOTIDE SEQUENCE [LARGE SCALE GENOMIC DNA]</scope>
</reference>
<organism>
    <name type="scientific">Homo sapiens</name>
    <name type="common">Human</name>
    <dbReference type="NCBI Taxonomy" id="9606"/>
    <lineage>
        <taxon>Eukaryota</taxon>
        <taxon>Metazoa</taxon>
        <taxon>Chordata</taxon>
        <taxon>Craniata</taxon>
        <taxon>Vertebrata</taxon>
        <taxon>Euteleostomi</taxon>
        <taxon>Mammalia</taxon>
        <taxon>Eutheria</taxon>
        <taxon>Euarchontoglires</taxon>
        <taxon>Primates</taxon>
        <taxon>Haplorrhini</taxon>
        <taxon>Catarrhini</taxon>
        <taxon>Hominidae</taxon>
        <taxon>Homo</taxon>
    </lineage>
</organism>
<gene>
    <name evidence="2" type="primary">C7orf78</name>
</gene>
<feature type="chain" id="PRO_0000460471" description="Putative uncharacterized protein C7orf78">
    <location>
        <begin position="1"/>
        <end position="256"/>
    </location>
</feature>
<feature type="region of interest" description="Disordered" evidence="1">
    <location>
        <begin position="1"/>
        <end position="23"/>
    </location>
</feature>
<feature type="compositionally biased region" description="Basic and acidic residues" evidence="1">
    <location>
        <begin position="12"/>
        <end position="23"/>
    </location>
</feature>
<feature type="splice variant" id="VSP_062342" description="In isoform 2.">
    <location>
        <begin position="1"/>
        <end position="52"/>
    </location>
</feature>
<accession>A0A1B0GVB3</accession>
<accession>A0A1B0GW04</accession>
<keyword id="KW-0025">Alternative splicing</keyword>
<keyword id="KW-1185">Reference proteome</keyword>
<name>CG078_HUMAN</name>
<proteinExistence type="predicted"/>
<protein>
    <recommendedName>
        <fullName>Putative uncharacterized protein C7orf78</fullName>
    </recommendedName>
</protein>
<comment type="alternative products">
    <event type="alternative splicing"/>
    <isoform>
        <id>A0A1B0GVB3-1</id>
        <name>1</name>
        <sequence type="displayed"/>
    </isoform>
    <isoform>
        <id>A0A1B0GVB3-2</id>
        <name>2</name>
        <sequence type="described" ref="VSP_062342"/>
    </isoform>
</comment>
<evidence type="ECO:0000256" key="1">
    <source>
        <dbReference type="SAM" id="MobiDB-lite"/>
    </source>
</evidence>
<evidence type="ECO:0000312" key="2">
    <source>
        <dbReference type="HGNC" id="HGNC:55185"/>
    </source>
</evidence>
<dbReference type="EMBL" id="AC005281">
    <property type="status" value="NOT_ANNOTATED_CDS"/>
    <property type="molecule type" value="Genomic_DNA"/>
</dbReference>
<dbReference type="EMBL" id="AC013470">
    <property type="status" value="NOT_ANNOTATED_CDS"/>
    <property type="molecule type" value="Genomic_DNA"/>
</dbReference>
<dbReference type="EMBL" id="AC092064">
    <property type="status" value="NOT_ANNOTATED_CDS"/>
    <property type="molecule type" value="Genomic_DNA"/>
</dbReference>
<dbReference type="CCDS" id="CCDS94055.1">
    <molecule id="A0A1B0GVB3-1"/>
</dbReference>
<dbReference type="CCDS" id="CCDS94056.1">
    <molecule id="A0A1B0GVB3-2"/>
</dbReference>
<dbReference type="RefSeq" id="NP_001373441.1">
    <molecule id="A0A1B0GVB3-2"/>
    <property type="nucleotide sequence ID" value="NM_001386512.1"/>
</dbReference>
<dbReference type="RefSeq" id="NP_001373443.1">
    <molecule id="A0A1B0GVB3-1"/>
    <property type="nucleotide sequence ID" value="NM_001386514.1"/>
</dbReference>
<dbReference type="BioMuta" id="ENSG00000226690"/>
<dbReference type="MassIVE" id="A0A1B0GVB3"/>
<dbReference type="Ensembl" id="ENST00000635746.1">
    <molecule id="A0A1B0GVB3-2"/>
    <property type="protein sequence ID" value="ENSP00000490721.1"/>
    <property type="gene ID" value="ENSG00000226690.9"/>
</dbReference>
<dbReference type="Ensembl" id="ENST00000636804.2">
    <molecule id="A0A1B0GVB3-1"/>
    <property type="protein sequence ID" value="ENSP00000490444.1"/>
    <property type="gene ID" value="ENSG00000226690.9"/>
</dbReference>
<dbReference type="GeneID" id="102725191"/>
<dbReference type="MANE-Select" id="ENST00000636804.2">
    <property type="protein sequence ID" value="ENSP00000490444.1"/>
    <property type="RefSeq nucleotide sequence ID" value="NM_001386514.1"/>
    <property type="RefSeq protein sequence ID" value="NP_001373443.1"/>
</dbReference>
<dbReference type="AGR" id="HGNC:55185"/>
<dbReference type="GeneCards" id="C7orf78"/>
<dbReference type="HGNC" id="HGNC:55185">
    <property type="gene designation" value="C7orf78"/>
</dbReference>
<dbReference type="OpenTargets" id="ENSG00000226690"/>
<dbReference type="VEuPathDB" id="HostDB:ENSG00000226690"/>
<dbReference type="GeneTree" id="ENSGT00850000133584"/>
<dbReference type="InParanoid" id="A0A1B0GVB3"/>
<dbReference type="OMA" id="KMKVNVW"/>
<dbReference type="PAN-GO" id="A0A1B0GVB3">
    <property type="GO annotations" value="0 GO annotations based on evolutionary models"/>
</dbReference>
<dbReference type="Proteomes" id="UP000005640">
    <property type="component" value="Chromosome 7"/>
</dbReference>
<dbReference type="RNAct" id="A0A1B0GVB3">
    <property type="molecule type" value="protein"/>
</dbReference>
<dbReference type="Bgee" id="ENSG00000226690">
    <property type="expression patterns" value="Expressed in right uterine tube and 56 other cell types or tissues"/>
</dbReference>
<dbReference type="ExpressionAtlas" id="A0A1B0GVB3">
    <property type="expression patterns" value="baseline and differential"/>
</dbReference>